<reference key="1">
    <citation type="journal article" date="2002" name="Nature">
        <title>The genome sequence of Schizosaccharomyces pombe.</title>
        <authorList>
            <person name="Wood V."/>
            <person name="Gwilliam R."/>
            <person name="Rajandream M.A."/>
            <person name="Lyne M.H."/>
            <person name="Lyne R."/>
            <person name="Stewart A."/>
            <person name="Sgouros J.G."/>
            <person name="Peat N."/>
            <person name="Hayles J."/>
            <person name="Baker S.G."/>
            <person name="Basham D."/>
            <person name="Bowman S."/>
            <person name="Brooks K."/>
            <person name="Brown D."/>
            <person name="Brown S."/>
            <person name="Chillingworth T."/>
            <person name="Churcher C.M."/>
            <person name="Collins M."/>
            <person name="Connor R."/>
            <person name="Cronin A."/>
            <person name="Davis P."/>
            <person name="Feltwell T."/>
            <person name="Fraser A."/>
            <person name="Gentles S."/>
            <person name="Goble A."/>
            <person name="Hamlin N."/>
            <person name="Harris D.E."/>
            <person name="Hidalgo J."/>
            <person name="Hodgson G."/>
            <person name="Holroyd S."/>
            <person name="Hornsby T."/>
            <person name="Howarth S."/>
            <person name="Huckle E.J."/>
            <person name="Hunt S."/>
            <person name="Jagels K."/>
            <person name="James K.D."/>
            <person name="Jones L."/>
            <person name="Jones M."/>
            <person name="Leather S."/>
            <person name="McDonald S."/>
            <person name="McLean J."/>
            <person name="Mooney P."/>
            <person name="Moule S."/>
            <person name="Mungall K.L."/>
            <person name="Murphy L.D."/>
            <person name="Niblett D."/>
            <person name="Odell C."/>
            <person name="Oliver K."/>
            <person name="O'Neil S."/>
            <person name="Pearson D."/>
            <person name="Quail M.A."/>
            <person name="Rabbinowitsch E."/>
            <person name="Rutherford K.M."/>
            <person name="Rutter S."/>
            <person name="Saunders D."/>
            <person name="Seeger K."/>
            <person name="Sharp S."/>
            <person name="Skelton J."/>
            <person name="Simmonds M.N."/>
            <person name="Squares R."/>
            <person name="Squares S."/>
            <person name="Stevens K."/>
            <person name="Taylor K."/>
            <person name="Taylor R.G."/>
            <person name="Tivey A."/>
            <person name="Walsh S.V."/>
            <person name="Warren T."/>
            <person name="Whitehead S."/>
            <person name="Woodward J.R."/>
            <person name="Volckaert G."/>
            <person name="Aert R."/>
            <person name="Robben J."/>
            <person name="Grymonprez B."/>
            <person name="Weltjens I."/>
            <person name="Vanstreels E."/>
            <person name="Rieger M."/>
            <person name="Schaefer M."/>
            <person name="Mueller-Auer S."/>
            <person name="Gabel C."/>
            <person name="Fuchs M."/>
            <person name="Duesterhoeft A."/>
            <person name="Fritzc C."/>
            <person name="Holzer E."/>
            <person name="Moestl D."/>
            <person name="Hilbert H."/>
            <person name="Borzym K."/>
            <person name="Langer I."/>
            <person name="Beck A."/>
            <person name="Lehrach H."/>
            <person name="Reinhardt R."/>
            <person name="Pohl T.M."/>
            <person name="Eger P."/>
            <person name="Zimmermann W."/>
            <person name="Wedler H."/>
            <person name="Wambutt R."/>
            <person name="Purnelle B."/>
            <person name="Goffeau A."/>
            <person name="Cadieu E."/>
            <person name="Dreano S."/>
            <person name="Gloux S."/>
            <person name="Lelaure V."/>
            <person name="Mottier S."/>
            <person name="Galibert F."/>
            <person name="Aves S.J."/>
            <person name="Xiang Z."/>
            <person name="Hunt C."/>
            <person name="Moore K."/>
            <person name="Hurst S.M."/>
            <person name="Lucas M."/>
            <person name="Rochet M."/>
            <person name="Gaillardin C."/>
            <person name="Tallada V.A."/>
            <person name="Garzon A."/>
            <person name="Thode G."/>
            <person name="Daga R.R."/>
            <person name="Cruzado L."/>
            <person name="Jimenez J."/>
            <person name="Sanchez M."/>
            <person name="del Rey F."/>
            <person name="Benito J."/>
            <person name="Dominguez A."/>
            <person name="Revuelta J.L."/>
            <person name="Moreno S."/>
            <person name="Armstrong J."/>
            <person name="Forsburg S.L."/>
            <person name="Cerutti L."/>
            <person name="Lowe T."/>
            <person name="McCombie W.R."/>
            <person name="Paulsen I."/>
            <person name="Potashkin J."/>
            <person name="Shpakovski G.V."/>
            <person name="Ussery D."/>
            <person name="Barrell B.G."/>
            <person name="Nurse P."/>
        </authorList>
    </citation>
    <scope>NUCLEOTIDE SEQUENCE [LARGE SCALE GENOMIC DNA]</scope>
    <source>
        <strain>972 / ATCC 24843</strain>
    </source>
</reference>
<reference key="2">
    <citation type="journal article" date="2008" name="Biochem. Biophys. Res. Commun.">
        <title>ADP-ribosylation factor arf6p may function as a molecular switch of new end take off in fission yeast.</title>
        <authorList>
            <person name="Fujita A."/>
        </authorList>
    </citation>
    <scope>SUBCELLULAR LOCATION</scope>
    <scope>FUNCTION</scope>
</reference>
<comment type="function">
    <text evidence="3">GTP-binding protein that functions as a molecular switch for the activation of 'new end take off' (NETO), a process in which the directions of cell growth change from a monopolar manner to a bipolar manner in fission yeast. Involved in supplying membrane to the growing new end.</text>
</comment>
<comment type="subcellular location">
    <subcellularLocation>
        <location evidence="3">Cell membrane</location>
        <topology evidence="3">Peripheral membrane protein</topology>
    </subcellularLocation>
    <text evidence="3">Localizes at both cell ends and to the cell division site in a cell-cycle dependent manner.</text>
</comment>
<comment type="similarity">
    <text evidence="4">Belongs to the small GTPase superfamily. Arf family.</text>
</comment>
<keyword id="KW-1003">Cell membrane</keyword>
<keyword id="KW-0342">GTP-binding</keyword>
<keyword id="KW-0449">Lipoprotein</keyword>
<keyword id="KW-0472">Membrane</keyword>
<keyword id="KW-0519">Myristate</keyword>
<keyword id="KW-0547">Nucleotide-binding</keyword>
<keyword id="KW-1185">Reference proteome</keyword>
<organism>
    <name type="scientific">Schizosaccharomyces pombe (strain 972 / ATCC 24843)</name>
    <name type="common">Fission yeast</name>
    <dbReference type="NCBI Taxonomy" id="284812"/>
    <lineage>
        <taxon>Eukaryota</taxon>
        <taxon>Fungi</taxon>
        <taxon>Dikarya</taxon>
        <taxon>Ascomycota</taxon>
        <taxon>Taphrinomycotina</taxon>
        <taxon>Schizosaccharomycetes</taxon>
        <taxon>Schizosaccharomycetales</taxon>
        <taxon>Schizosaccharomycetaceae</taxon>
        <taxon>Schizosaccharomyces</taxon>
    </lineage>
</organism>
<accession>Q9Y7Z2</accession>
<name>ARF6_SCHPO</name>
<feature type="initiator methionine" description="Removed" evidence="2">
    <location>
        <position position="1"/>
    </location>
</feature>
<feature type="chain" id="PRO_0000207417" description="ADP-ribosylation factor 6">
    <location>
        <begin position="2"/>
        <end position="184"/>
    </location>
</feature>
<feature type="binding site" evidence="1">
    <location>
        <begin position="28"/>
        <end position="35"/>
    </location>
    <ligand>
        <name>GTP</name>
        <dbReference type="ChEBI" id="CHEBI:37565"/>
    </ligand>
</feature>
<feature type="binding site" evidence="1">
    <location>
        <begin position="71"/>
        <end position="75"/>
    </location>
    <ligand>
        <name>GTP</name>
        <dbReference type="ChEBI" id="CHEBI:37565"/>
    </ligand>
</feature>
<feature type="binding site" evidence="1">
    <location>
        <begin position="130"/>
        <end position="133"/>
    </location>
    <ligand>
        <name>GTP</name>
        <dbReference type="ChEBI" id="CHEBI:37565"/>
    </ligand>
</feature>
<feature type="lipid moiety-binding region" description="N-myristoyl glycine" evidence="2">
    <location>
        <position position="2"/>
    </location>
</feature>
<proteinExistence type="inferred from homology"/>
<protein>
    <recommendedName>
        <fullName>ADP-ribosylation factor 6</fullName>
    </recommendedName>
</protein>
<gene>
    <name type="primary">arf6</name>
    <name type="ORF">SPBC1539.08</name>
</gene>
<sequence length="184" mass="20723">MGNSLFKGFSKPFSRLFSNKEMRILMLGLDAAGKTTILYKLKLNQSVVTIPTVGFNVETVTYKNIKFNVWDVGGQDKIRPLWRHYFTGTKGLIFVVDSADSNRISEARQELHRIISDREMRDCLLLVLANKQDLPGALSPAQITDVLQLDKLKDRLWNVQPTCALTGDGLLEGLAWLSQNAKLK</sequence>
<evidence type="ECO:0000250" key="1"/>
<evidence type="ECO:0000255" key="2"/>
<evidence type="ECO:0000269" key="3">
    <source>
    </source>
</evidence>
<evidence type="ECO:0000305" key="4"/>
<dbReference type="EMBL" id="CU329671">
    <property type="protein sequence ID" value="CAB51340.1"/>
    <property type="molecule type" value="Genomic_DNA"/>
</dbReference>
<dbReference type="PIR" id="T39467">
    <property type="entry name" value="T39467"/>
</dbReference>
<dbReference type="RefSeq" id="NP_596822.1">
    <property type="nucleotide sequence ID" value="NM_001023842.2"/>
</dbReference>
<dbReference type="SMR" id="Q9Y7Z2"/>
<dbReference type="BioGRID" id="276481">
    <property type="interactions" value="71"/>
</dbReference>
<dbReference type="FunCoup" id="Q9Y7Z2">
    <property type="interactions" value="757"/>
</dbReference>
<dbReference type="STRING" id="284812.Q9Y7Z2"/>
<dbReference type="PaxDb" id="4896-SPBC1539.08.1"/>
<dbReference type="EnsemblFungi" id="SPBC1539.08.1">
    <property type="protein sequence ID" value="SPBC1539.08.1:pep"/>
    <property type="gene ID" value="SPBC1539.08"/>
</dbReference>
<dbReference type="GeneID" id="2539937"/>
<dbReference type="KEGG" id="spo:2539937"/>
<dbReference type="PomBase" id="SPBC1539.08">
    <property type="gene designation" value="arf6"/>
</dbReference>
<dbReference type="VEuPathDB" id="FungiDB:SPBC1539.08"/>
<dbReference type="eggNOG" id="KOG0071">
    <property type="taxonomic scope" value="Eukaryota"/>
</dbReference>
<dbReference type="HOGENOM" id="CLU_040729_9_3_1"/>
<dbReference type="InParanoid" id="Q9Y7Z2"/>
<dbReference type="OMA" id="GGQISKM"/>
<dbReference type="PhylomeDB" id="Q9Y7Z2"/>
<dbReference type="PRO" id="PR:Q9Y7Z2"/>
<dbReference type="Proteomes" id="UP000002485">
    <property type="component" value="Chromosome II"/>
</dbReference>
<dbReference type="GO" id="GO:0110115">
    <property type="term" value="C:Cdr2 medial cortical node complex"/>
    <property type="evidence" value="ECO:0000314"/>
    <property type="project" value="PomBase"/>
</dbReference>
<dbReference type="GO" id="GO:0005938">
    <property type="term" value="C:cell cortex"/>
    <property type="evidence" value="ECO:0000314"/>
    <property type="project" value="PomBase"/>
</dbReference>
<dbReference type="GO" id="GO:0051285">
    <property type="term" value="C:cell cortex of cell tip"/>
    <property type="evidence" value="ECO:0000314"/>
    <property type="project" value="PomBase"/>
</dbReference>
<dbReference type="GO" id="GO:0032153">
    <property type="term" value="C:cell division site"/>
    <property type="evidence" value="ECO:0000314"/>
    <property type="project" value="PomBase"/>
</dbReference>
<dbReference type="GO" id="GO:0005737">
    <property type="term" value="C:cytoplasm"/>
    <property type="evidence" value="ECO:0000318"/>
    <property type="project" value="GO_Central"/>
</dbReference>
<dbReference type="GO" id="GO:0000935">
    <property type="term" value="C:division septum"/>
    <property type="evidence" value="ECO:0000314"/>
    <property type="project" value="PomBase"/>
</dbReference>
<dbReference type="GO" id="GO:0005886">
    <property type="term" value="C:plasma membrane"/>
    <property type="evidence" value="ECO:0000318"/>
    <property type="project" value="GO_Central"/>
</dbReference>
<dbReference type="GO" id="GO:0005525">
    <property type="term" value="F:GTP binding"/>
    <property type="evidence" value="ECO:0000318"/>
    <property type="project" value="GO_Central"/>
</dbReference>
<dbReference type="GO" id="GO:0003924">
    <property type="term" value="F:GTPase activity"/>
    <property type="evidence" value="ECO:0000250"/>
    <property type="project" value="PomBase"/>
</dbReference>
<dbReference type="GO" id="GO:0043495">
    <property type="term" value="F:protein-membrane adaptor activity"/>
    <property type="evidence" value="ECO:0000315"/>
    <property type="project" value="PomBase"/>
</dbReference>
<dbReference type="GO" id="GO:0051523">
    <property type="term" value="P:cell growth mode switching, monopolar to bipolar"/>
    <property type="evidence" value="ECO:0000315"/>
    <property type="project" value="PomBase"/>
</dbReference>
<dbReference type="GO" id="GO:0006886">
    <property type="term" value="P:intracellular protein transport"/>
    <property type="evidence" value="ECO:0000318"/>
    <property type="project" value="GO_Central"/>
</dbReference>
<dbReference type="GO" id="GO:0010971">
    <property type="term" value="P:positive regulation of G2/M transition of mitotic cell cycle"/>
    <property type="evidence" value="ECO:0000315"/>
    <property type="project" value="PomBase"/>
</dbReference>
<dbReference type="GO" id="GO:0032465">
    <property type="term" value="P:regulation of cytokinesis"/>
    <property type="evidence" value="ECO:0000316"/>
    <property type="project" value="PomBase"/>
</dbReference>
<dbReference type="GO" id="GO:0016192">
    <property type="term" value="P:vesicle-mediated transport"/>
    <property type="evidence" value="ECO:0000318"/>
    <property type="project" value="GO_Central"/>
</dbReference>
<dbReference type="CDD" id="cd04149">
    <property type="entry name" value="Arf6"/>
    <property type="match status" value="1"/>
</dbReference>
<dbReference type="FunFam" id="3.40.50.300:FF:000412">
    <property type="entry name" value="ADP-ribosylation factor 1"/>
    <property type="match status" value="1"/>
</dbReference>
<dbReference type="Gene3D" id="3.40.50.300">
    <property type="entry name" value="P-loop containing nucleotide triphosphate hydrolases"/>
    <property type="match status" value="1"/>
</dbReference>
<dbReference type="InterPro" id="IPR041838">
    <property type="entry name" value="Arf6"/>
</dbReference>
<dbReference type="InterPro" id="IPR027417">
    <property type="entry name" value="P-loop_NTPase"/>
</dbReference>
<dbReference type="InterPro" id="IPR005225">
    <property type="entry name" value="Small_GTP-bd"/>
</dbReference>
<dbReference type="InterPro" id="IPR024156">
    <property type="entry name" value="Small_GTPase_ARF"/>
</dbReference>
<dbReference type="InterPro" id="IPR006689">
    <property type="entry name" value="Small_GTPase_ARF/SAR"/>
</dbReference>
<dbReference type="NCBIfam" id="TIGR00231">
    <property type="entry name" value="small_GTP"/>
    <property type="match status" value="1"/>
</dbReference>
<dbReference type="PANTHER" id="PTHR11711">
    <property type="entry name" value="ADP RIBOSYLATION FACTOR-RELATED"/>
    <property type="match status" value="1"/>
</dbReference>
<dbReference type="Pfam" id="PF00025">
    <property type="entry name" value="Arf"/>
    <property type="match status" value="1"/>
</dbReference>
<dbReference type="PRINTS" id="PR00328">
    <property type="entry name" value="SAR1GTPBP"/>
</dbReference>
<dbReference type="SMART" id="SM00177">
    <property type="entry name" value="ARF"/>
    <property type="match status" value="1"/>
</dbReference>
<dbReference type="SMART" id="SM00175">
    <property type="entry name" value="RAB"/>
    <property type="match status" value="1"/>
</dbReference>
<dbReference type="SMART" id="SM00178">
    <property type="entry name" value="SAR"/>
    <property type="match status" value="1"/>
</dbReference>
<dbReference type="SUPFAM" id="SSF52540">
    <property type="entry name" value="P-loop containing nucleoside triphosphate hydrolases"/>
    <property type="match status" value="1"/>
</dbReference>
<dbReference type="PROSITE" id="PS51417">
    <property type="entry name" value="ARF"/>
    <property type="match status" value="1"/>
</dbReference>